<evidence type="ECO:0000255" key="1">
    <source>
        <dbReference type="HAMAP-Rule" id="MF_01430"/>
    </source>
</evidence>
<evidence type="ECO:0000255" key="2">
    <source>
        <dbReference type="PROSITE-ProRule" id="PRU01115"/>
    </source>
</evidence>
<keyword id="KW-0998">Cell outer membrane</keyword>
<keyword id="KW-0472">Membrane</keyword>
<keyword id="KW-1185">Reference proteome</keyword>
<keyword id="KW-0677">Repeat</keyword>
<keyword id="KW-0732">Signal</keyword>
<keyword id="KW-0812">Transmembrane</keyword>
<keyword id="KW-1134">Transmembrane beta strand</keyword>
<accession>B2U320</accession>
<proteinExistence type="inferred from homology"/>
<name>BAMA_SHIB3</name>
<gene>
    <name evidence="1" type="primary">bamA</name>
    <name type="synonym">yaeT</name>
    <name type="ordered locus">SbBS512_E0170</name>
</gene>
<comment type="function">
    <text evidence="1">Part of the outer membrane protein assembly complex, which is involved in assembly and insertion of beta-barrel proteins into the outer membrane. Constitutes, with BamD, the core component of the assembly machinery.</text>
</comment>
<comment type="subunit">
    <text evidence="1">Part of the Bam complex, which is composed of the outer membrane protein BamA, and four lipoproteins BamB, BamC, BamD and BamE.</text>
</comment>
<comment type="subcellular location">
    <subcellularLocation>
        <location evidence="1">Cell outer membrane</location>
    </subcellularLocation>
</comment>
<comment type="similarity">
    <text evidence="1">Belongs to the BamA family.</text>
</comment>
<protein>
    <recommendedName>
        <fullName evidence="1">Outer membrane protein assembly factor BamA</fullName>
    </recommendedName>
</protein>
<reference key="1">
    <citation type="submission" date="2008-05" db="EMBL/GenBank/DDBJ databases">
        <title>Complete sequence of Shigella boydii serotype 18 strain BS512.</title>
        <authorList>
            <person name="Rasko D.A."/>
            <person name="Rosovitz M."/>
            <person name="Maurelli A.T."/>
            <person name="Myers G."/>
            <person name="Seshadri R."/>
            <person name="Cer R."/>
            <person name="Jiang L."/>
            <person name="Ravel J."/>
            <person name="Sebastian Y."/>
        </authorList>
    </citation>
    <scope>NUCLEOTIDE SEQUENCE [LARGE SCALE GENOMIC DNA]</scope>
    <source>
        <strain>CDC 3083-94 / BS512</strain>
    </source>
</reference>
<sequence length="810" mass="90553">MAMKKLLIASLLFSSATVYGAEGFVVKDIHFEGLQRVAVGAALLSMPVRTGDTVNDEDISNTIRALFATGNFEDVRVLRDGDTLLVQVKERPTIASITFSGNKSVKDDMLKQNLEASGVRVGESLDRTTIADIEKGLEDFYYSVGKYSASVKAVVTPLPRNRVDLKLVFQEGVSAEIQQINIVGNHAFTTDELISHFQLRDEVPWWNVVGDRKYQKQKLAGDLETLRSYYLDRGYARFNIDSTQVSLTPDKKGIYVTVNITEGDQYKLSGVEVSGNLAGHSAEIEQLTKIEPGELYNGTKVTKMEDDIKKLLGRYGYAYPRVQSMPEINDADKTVKLRVNVDAGNRFYVRKIRFEGNDTSKDAVLRREMRQMEGAWLGSDLVDQGKERLNRLGFFETVDTDTQRVPGSPDQVDVVYKVKERNTGSFNFGIGYGTESGVSFQAGVQQDNWLGTGYAVGINGTKNDYQTYAELSVTNPYFTVDGVSLGGRLFYNDFQADDADLSDYTNKSYGTDVTLGFPINEYNSLRAGLGYVHNSLSNMQPQVAMWRYLYSMGEHPSTSDQDNSFKTDDFTFNYGWTYNKLDRGYFPTDGSRVNLTGKVTIPGSDNEYYKVTLDTATYVPIDDDHKWVVLGRTRWGYGDGLGGKEMPFYENFYAGGSSTVRGFQSNTIGPKAVYFPHQASNYDPDYDYECATQDGAKDLCKSDDAVGGNAMAVASLEFITPTPFISDKYANSVRTSFFWDMGTVWDTNWDSSQYSGYPDYSDPSNIRMSAGIALQWMSPLGPLVFSYAQPFKKYDGDKAEQFQFNIGKTW</sequence>
<feature type="signal peptide" evidence="1">
    <location>
        <begin position="1"/>
        <end position="20"/>
    </location>
</feature>
<feature type="chain" id="PRO_1000145787" description="Outer membrane protein assembly factor BamA">
    <location>
        <begin position="21"/>
        <end position="810"/>
    </location>
</feature>
<feature type="domain" description="POTRA 1" evidence="2">
    <location>
        <begin position="24"/>
        <end position="91"/>
    </location>
</feature>
<feature type="domain" description="POTRA 2" evidence="2">
    <location>
        <begin position="92"/>
        <end position="172"/>
    </location>
</feature>
<feature type="domain" description="POTRA 3" evidence="2">
    <location>
        <begin position="175"/>
        <end position="263"/>
    </location>
</feature>
<feature type="domain" description="POTRA 4" evidence="2">
    <location>
        <begin position="266"/>
        <end position="344"/>
    </location>
</feature>
<feature type="domain" description="POTRA 5" evidence="2">
    <location>
        <begin position="347"/>
        <end position="421"/>
    </location>
</feature>
<organism>
    <name type="scientific">Shigella boydii serotype 18 (strain CDC 3083-94 / BS512)</name>
    <dbReference type="NCBI Taxonomy" id="344609"/>
    <lineage>
        <taxon>Bacteria</taxon>
        <taxon>Pseudomonadati</taxon>
        <taxon>Pseudomonadota</taxon>
        <taxon>Gammaproteobacteria</taxon>
        <taxon>Enterobacterales</taxon>
        <taxon>Enterobacteriaceae</taxon>
        <taxon>Shigella</taxon>
    </lineage>
</organism>
<dbReference type="EMBL" id="CP001063">
    <property type="protein sequence ID" value="ACD10131.1"/>
    <property type="molecule type" value="Genomic_DNA"/>
</dbReference>
<dbReference type="RefSeq" id="WP_001240896.1">
    <property type="nucleotide sequence ID" value="NC_010658.1"/>
</dbReference>
<dbReference type="SMR" id="B2U320"/>
<dbReference type="STRING" id="344609.SbBS512_E0170"/>
<dbReference type="GeneID" id="93777248"/>
<dbReference type="KEGG" id="sbc:SbBS512_E0170"/>
<dbReference type="HOGENOM" id="CLU_007664_1_0_6"/>
<dbReference type="Proteomes" id="UP000001030">
    <property type="component" value="Chromosome"/>
</dbReference>
<dbReference type="GO" id="GO:1990063">
    <property type="term" value="C:Bam protein complex"/>
    <property type="evidence" value="ECO:0007669"/>
    <property type="project" value="TreeGrafter"/>
</dbReference>
<dbReference type="GO" id="GO:0043165">
    <property type="term" value="P:Gram-negative-bacterium-type cell outer membrane assembly"/>
    <property type="evidence" value="ECO:0007669"/>
    <property type="project" value="UniProtKB-UniRule"/>
</dbReference>
<dbReference type="GO" id="GO:0051205">
    <property type="term" value="P:protein insertion into membrane"/>
    <property type="evidence" value="ECO:0007669"/>
    <property type="project" value="UniProtKB-UniRule"/>
</dbReference>
<dbReference type="FunFam" id="2.40.160.50:FF:000001">
    <property type="entry name" value="Outer membrane protein assembly factor BamA"/>
    <property type="match status" value="1"/>
</dbReference>
<dbReference type="FunFam" id="3.10.20.310:FF:000001">
    <property type="entry name" value="Outer membrane protein assembly factor BamA"/>
    <property type="match status" value="1"/>
</dbReference>
<dbReference type="FunFam" id="3.10.20.310:FF:000002">
    <property type="entry name" value="Outer membrane protein assembly factor BamA"/>
    <property type="match status" value="1"/>
</dbReference>
<dbReference type="FunFam" id="3.10.20.310:FF:000003">
    <property type="entry name" value="Outer membrane protein assembly factor BamA"/>
    <property type="match status" value="1"/>
</dbReference>
<dbReference type="FunFam" id="3.10.20.310:FF:000004">
    <property type="entry name" value="Outer membrane protein assembly factor BamA"/>
    <property type="match status" value="1"/>
</dbReference>
<dbReference type="FunFam" id="3.10.20.310:FF:000005">
    <property type="entry name" value="Outer membrane protein assembly factor BamA"/>
    <property type="match status" value="1"/>
</dbReference>
<dbReference type="Gene3D" id="3.10.20.310">
    <property type="entry name" value="membrane protein fhac"/>
    <property type="match status" value="5"/>
</dbReference>
<dbReference type="Gene3D" id="2.40.160.50">
    <property type="entry name" value="membrane protein fhac: a member of the omp85/tpsb transporter family"/>
    <property type="match status" value="1"/>
</dbReference>
<dbReference type="HAMAP" id="MF_01430">
    <property type="entry name" value="OM_assembly_BamA"/>
    <property type="match status" value="1"/>
</dbReference>
<dbReference type="InterPro" id="IPR000184">
    <property type="entry name" value="Bac_surfAg_D15"/>
</dbReference>
<dbReference type="InterPro" id="IPR010827">
    <property type="entry name" value="BamA/TamA_POTRA"/>
</dbReference>
<dbReference type="InterPro" id="IPR039910">
    <property type="entry name" value="D15-like"/>
</dbReference>
<dbReference type="InterPro" id="IPR023707">
    <property type="entry name" value="OM_assembly_BamA"/>
</dbReference>
<dbReference type="InterPro" id="IPR034746">
    <property type="entry name" value="POTRA"/>
</dbReference>
<dbReference type="NCBIfam" id="TIGR03303">
    <property type="entry name" value="OM_YaeT"/>
    <property type="match status" value="1"/>
</dbReference>
<dbReference type="NCBIfam" id="NF008287">
    <property type="entry name" value="PRK11067.1"/>
    <property type="match status" value="1"/>
</dbReference>
<dbReference type="PANTHER" id="PTHR12815:SF23">
    <property type="entry name" value="OUTER MEMBRANE PROTEIN ASSEMBLY FACTOR BAMA"/>
    <property type="match status" value="1"/>
</dbReference>
<dbReference type="PANTHER" id="PTHR12815">
    <property type="entry name" value="SORTING AND ASSEMBLY MACHINERY SAMM50 PROTEIN FAMILY MEMBER"/>
    <property type="match status" value="1"/>
</dbReference>
<dbReference type="Pfam" id="PF01103">
    <property type="entry name" value="Omp85"/>
    <property type="match status" value="1"/>
</dbReference>
<dbReference type="Pfam" id="PF07244">
    <property type="entry name" value="POTRA"/>
    <property type="match status" value="4"/>
</dbReference>
<dbReference type="PIRSF" id="PIRSF006076">
    <property type="entry name" value="OM_assembly_OMP85"/>
    <property type="match status" value="1"/>
</dbReference>
<dbReference type="PROSITE" id="PS51779">
    <property type="entry name" value="POTRA"/>
    <property type="match status" value="5"/>
</dbReference>